<comment type="function">
    <text evidence="1">Required for the formation of a threonylcarbamoyl group on adenosine at position 37 (t(6)A37) in tRNAs that read codons beginning with adenine. Catalyzes the conversion of L-threonine, HCO(3)(-)/CO(2) and ATP to give threonylcarbamoyl-AMP (TC-AMP) as the acyladenylate intermediate, with the release of diphosphate.</text>
</comment>
<comment type="catalytic activity">
    <reaction evidence="1">
        <text>L-threonine + hydrogencarbonate + ATP = L-threonylcarbamoyladenylate + diphosphate + H2O</text>
        <dbReference type="Rhea" id="RHEA:36407"/>
        <dbReference type="ChEBI" id="CHEBI:15377"/>
        <dbReference type="ChEBI" id="CHEBI:17544"/>
        <dbReference type="ChEBI" id="CHEBI:30616"/>
        <dbReference type="ChEBI" id="CHEBI:33019"/>
        <dbReference type="ChEBI" id="CHEBI:57926"/>
        <dbReference type="ChEBI" id="CHEBI:73682"/>
        <dbReference type="EC" id="2.7.7.87"/>
    </reaction>
</comment>
<comment type="subcellular location">
    <subcellularLocation>
        <location evidence="1">Cytoplasm</location>
    </subcellularLocation>
</comment>
<comment type="similarity">
    <text evidence="1">Belongs to the SUA5 family. TsaC subfamily.</text>
</comment>
<feature type="chain" id="PRO_0000352932" description="Threonylcarbamoyl-AMP synthase">
    <location>
        <begin position="1"/>
        <end position="183"/>
    </location>
</feature>
<feature type="domain" description="YrdC-like" evidence="1">
    <location>
        <begin position="1"/>
        <end position="183"/>
    </location>
</feature>
<gene>
    <name evidence="1" type="primary">tsaC</name>
    <name type="synonym">rimN</name>
    <name type="ordered locus">MS0132</name>
</gene>
<sequence length="183" mass="20336">MELAQIVERLKKNEVVAYPTEAVFGLGCNPNSKSAVEKLLILKQRPVEKGLILVAHKLDLLLPFIDESRLKQSHWQLLTQQYDCPTTWVVPAKLSVPKFITGQFDSVAVRLCTHPAVAQLCEQTGFALTSTSANLSGLPPCKTAQQVRSQFGEFFPVLDMAVGNAVNPSEIRDIFSRQIFRRG</sequence>
<proteinExistence type="inferred from homology"/>
<dbReference type="EC" id="2.7.7.87" evidence="1"/>
<dbReference type="EMBL" id="AE016827">
    <property type="protein sequence ID" value="AAU36739.1"/>
    <property type="molecule type" value="Genomic_DNA"/>
</dbReference>
<dbReference type="RefSeq" id="WP_011199315.1">
    <property type="nucleotide sequence ID" value="NC_006300.1"/>
</dbReference>
<dbReference type="SMR" id="Q65WC1"/>
<dbReference type="STRING" id="221988.MS0132"/>
<dbReference type="KEGG" id="msu:MS0132"/>
<dbReference type="eggNOG" id="COG0009">
    <property type="taxonomic scope" value="Bacteria"/>
</dbReference>
<dbReference type="HOGENOM" id="CLU_031397_6_0_6"/>
<dbReference type="OrthoDB" id="9814580at2"/>
<dbReference type="Proteomes" id="UP000000607">
    <property type="component" value="Chromosome"/>
</dbReference>
<dbReference type="GO" id="GO:0005737">
    <property type="term" value="C:cytoplasm"/>
    <property type="evidence" value="ECO:0007669"/>
    <property type="project" value="UniProtKB-SubCell"/>
</dbReference>
<dbReference type="GO" id="GO:0005524">
    <property type="term" value="F:ATP binding"/>
    <property type="evidence" value="ECO:0007669"/>
    <property type="project" value="UniProtKB-UniRule"/>
</dbReference>
<dbReference type="GO" id="GO:0003725">
    <property type="term" value="F:double-stranded RNA binding"/>
    <property type="evidence" value="ECO:0007669"/>
    <property type="project" value="InterPro"/>
</dbReference>
<dbReference type="GO" id="GO:0061710">
    <property type="term" value="F:L-threonylcarbamoyladenylate synthase"/>
    <property type="evidence" value="ECO:0007669"/>
    <property type="project" value="UniProtKB-EC"/>
</dbReference>
<dbReference type="GO" id="GO:0000049">
    <property type="term" value="F:tRNA binding"/>
    <property type="evidence" value="ECO:0007669"/>
    <property type="project" value="TreeGrafter"/>
</dbReference>
<dbReference type="GO" id="GO:0006450">
    <property type="term" value="P:regulation of translational fidelity"/>
    <property type="evidence" value="ECO:0007669"/>
    <property type="project" value="TreeGrafter"/>
</dbReference>
<dbReference type="GO" id="GO:0002949">
    <property type="term" value="P:tRNA threonylcarbamoyladenosine modification"/>
    <property type="evidence" value="ECO:0007669"/>
    <property type="project" value="UniProtKB-UniRule"/>
</dbReference>
<dbReference type="FunFam" id="3.90.870.10:FF:000004">
    <property type="entry name" value="Threonylcarbamoyl-AMP synthase"/>
    <property type="match status" value="1"/>
</dbReference>
<dbReference type="Gene3D" id="3.90.870.10">
    <property type="entry name" value="DHBP synthase"/>
    <property type="match status" value="1"/>
</dbReference>
<dbReference type="HAMAP" id="MF_01852">
    <property type="entry name" value="TsaC"/>
    <property type="match status" value="1"/>
</dbReference>
<dbReference type="InterPro" id="IPR017945">
    <property type="entry name" value="DHBP_synth_RibB-like_a/b_dom"/>
</dbReference>
<dbReference type="InterPro" id="IPR006070">
    <property type="entry name" value="Sua5-like_dom"/>
</dbReference>
<dbReference type="InterPro" id="IPR023535">
    <property type="entry name" value="TC-AMP_synthase"/>
</dbReference>
<dbReference type="InterPro" id="IPR050156">
    <property type="entry name" value="TC-AMP_synthase_SUA5"/>
</dbReference>
<dbReference type="PANTHER" id="PTHR17490">
    <property type="entry name" value="SUA5"/>
    <property type="match status" value="1"/>
</dbReference>
<dbReference type="PANTHER" id="PTHR17490:SF18">
    <property type="entry name" value="THREONYLCARBAMOYL-AMP SYNTHASE"/>
    <property type="match status" value="1"/>
</dbReference>
<dbReference type="Pfam" id="PF01300">
    <property type="entry name" value="Sua5_yciO_yrdC"/>
    <property type="match status" value="1"/>
</dbReference>
<dbReference type="SUPFAM" id="SSF55821">
    <property type="entry name" value="YrdC/RibB"/>
    <property type="match status" value="1"/>
</dbReference>
<dbReference type="PROSITE" id="PS51163">
    <property type="entry name" value="YRDC"/>
    <property type="match status" value="1"/>
</dbReference>
<keyword id="KW-0067">ATP-binding</keyword>
<keyword id="KW-0963">Cytoplasm</keyword>
<keyword id="KW-0547">Nucleotide-binding</keyword>
<keyword id="KW-0548">Nucleotidyltransferase</keyword>
<keyword id="KW-0808">Transferase</keyword>
<keyword id="KW-0819">tRNA processing</keyword>
<protein>
    <recommendedName>
        <fullName evidence="1">Threonylcarbamoyl-AMP synthase</fullName>
        <shortName evidence="1">TC-AMP synthase</shortName>
        <ecNumber evidence="1">2.7.7.87</ecNumber>
    </recommendedName>
    <alternativeName>
        <fullName evidence="1">L-threonylcarbamoyladenylate synthase</fullName>
    </alternativeName>
    <alternativeName>
        <fullName evidence="1">t(6)A37 threonylcarbamoyladenosine biosynthesis protein TsaC</fullName>
    </alternativeName>
    <alternativeName>
        <fullName evidence="1">tRNA threonylcarbamoyladenosine biosynthesis protein TsaC</fullName>
    </alternativeName>
</protein>
<name>TSAC_MANSM</name>
<reference key="1">
    <citation type="journal article" date="2004" name="Nat. Biotechnol.">
        <title>The genome sequence of the capnophilic rumen bacterium Mannheimia succiniciproducens.</title>
        <authorList>
            <person name="Hong S.H."/>
            <person name="Kim J.S."/>
            <person name="Lee S.Y."/>
            <person name="In Y.H."/>
            <person name="Choi S.S."/>
            <person name="Rih J.-K."/>
            <person name="Kim C.H."/>
            <person name="Jeong H."/>
            <person name="Hur C.G."/>
            <person name="Kim J.J."/>
        </authorList>
    </citation>
    <scope>NUCLEOTIDE SEQUENCE [LARGE SCALE GENOMIC DNA]</scope>
    <source>
        <strain>KCTC 0769BP / MBEL55E</strain>
    </source>
</reference>
<accession>Q65WC1</accession>
<evidence type="ECO:0000255" key="1">
    <source>
        <dbReference type="HAMAP-Rule" id="MF_01852"/>
    </source>
</evidence>
<organism>
    <name type="scientific">Mannheimia succiniciproducens (strain KCTC 0769BP / MBEL55E)</name>
    <dbReference type="NCBI Taxonomy" id="221988"/>
    <lineage>
        <taxon>Bacteria</taxon>
        <taxon>Pseudomonadati</taxon>
        <taxon>Pseudomonadota</taxon>
        <taxon>Gammaproteobacteria</taxon>
        <taxon>Pasteurellales</taxon>
        <taxon>Pasteurellaceae</taxon>
        <taxon>Basfia</taxon>
    </lineage>
</organism>